<keyword id="KW-0119">Carbohydrate metabolism</keyword>
<keyword id="KW-0325">Glycoprotein</keyword>
<keyword id="KW-0333">Golgi apparatus</keyword>
<keyword id="KW-0472">Membrane</keyword>
<keyword id="KW-1185">Reference proteome</keyword>
<keyword id="KW-0735">Signal-anchor</keyword>
<keyword id="KW-0808">Transferase</keyword>
<keyword id="KW-0812">Transmembrane</keyword>
<keyword id="KW-1133">Transmembrane helix</keyword>
<proteinExistence type="evidence at transcript level"/>
<dbReference type="EC" id="2.8.2.5"/>
<dbReference type="EMBL" id="AJ289132">
    <property type="protein sequence ID" value="CAB92140.1"/>
    <property type="molecule type" value="mRNA"/>
</dbReference>
<dbReference type="EMBL" id="AK142155">
    <property type="protein sequence ID" value="BAE24951.1"/>
    <property type="molecule type" value="mRNA"/>
</dbReference>
<dbReference type="EMBL" id="AK170484">
    <property type="protein sequence ID" value="BAE41826.1"/>
    <property type="molecule type" value="mRNA"/>
</dbReference>
<dbReference type="EMBL" id="AK171208">
    <property type="protein sequence ID" value="BAE42314.1"/>
    <property type="molecule type" value="mRNA"/>
</dbReference>
<dbReference type="EMBL" id="CH466529">
    <property type="protein sequence ID" value="EDL19118.1"/>
    <property type="molecule type" value="Genomic_DNA"/>
</dbReference>
<dbReference type="EMBL" id="BC003201">
    <property type="protein sequence ID" value="AAH03201.1"/>
    <property type="molecule type" value="mRNA"/>
</dbReference>
<dbReference type="CCDS" id="CCDS19820.1"/>
<dbReference type="RefSeq" id="NP_001412644.1">
    <property type="nucleotide sequence ID" value="NM_001425715.1"/>
</dbReference>
<dbReference type="RefSeq" id="NP_067503.3">
    <property type="nucleotide sequence ID" value="NM_021528.3"/>
</dbReference>
<dbReference type="RefSeq" id="XP_006504788.1">
    <property type="nucleotide sequence ID" value="XM_006504725.2"/>
</dbReference>
<dbReference type="BioGRID" id="208498">
    <property type="interactions" value="1"/>
</dbReference>
<dbReference type="FunCoup" id="Q99LL3">
    <property type="interactions" value="327"/>
</dbReference>
<dbReference type="STRING" id="10090.ENSMUSP00000041663"/>
<dbReference type="GlyCosmos" id="Q99LL3">
    <property type="glycosylation" value="4 sites, No reported glycans"/>
</dbReference>
<dbReference type="GlyGen" id="Q99LL3">
    <property type="glycosylation" value="4 sites, 3 N-linked glycans (3 sites)"/>
</dbReference>
<dbReference type="iPTMnet" id="Q99LL3"/>
<dbReference type="PhosphoSitePlus" id="Q99LL3"/>
<dbReference type="PaxDb" id="10090-ENSMUSP00000041663"/>
<dbReference type="ProteomicsDB" id="281680"/>
<dbReference type="Pumba" id="Q99LL3"/>
<dbReference type="Antibodypedia" id="24375">
    <property type="antibodies" value="71 antibodies from 23 providers"/>
</dbReference>
<dbReference type="DNASU" id="59031"/>
<dbReference type="Ensembl" id="ENSMUST00000043050.9">
    <property type="protein sequence ID" value="ENSMUSP00000041663.9"/>
    <property type="gene ID" value="ENSMUSG00000036599.11"/>
</dbReference>
<dbReference type="GeneID" id="59031"/>
<dbReference type="KEGG" id="mmu:59031"/>
<dbReference type="UCSC" id="uc009ahs.2">
    <property type="organism name" value="mouse"/>
</dbReference>
<dbReference type="AGR" id="MGI:1929064"/>
<dbReference type="CTD" id="55501"/>
<dbReference type="MGI" id="MGI:1929064">
    <property type="gene designation" value="Chst12"/>
</dbReference>
<dbReference type="VEuPathDB" id="HostDB:ENSMUSG00000036599"/>
<dbReference type="eggNOG" id="KOG4651">
    <property type="taxonomic scope" value="Eukaryota"/>
</dbReference>
<dbReference type="GeneTree" id="ENSGT00940000156614"/>
<dbReference type="HOGENOM" id="CLU_043398_1_0_1"/>
<dbReference type="InParanoid" id="Q99LL3"/>
<dbReference type="OMA" id="VPMLKMY"/>
<dbReference type="OrthoDB" id="2019940at2759"/>
<dbReference type="PhylomeDB" id="Q99LL3"/>
<dbReference type="TreeFam" id="TF325581"/>
<dbReference type="Reactome" id="R-MMU-2022870">
    <property type="pathway name" value="Chondroitin sulfate biosynthesis"/>
</dbReference>
<dbReference type="BioGRID-ORCS" id="59031">
    <property type="hits" value="2 hits in 79 CRISPR screens"/>
</dbReference>
<dbReference type="ChiTaRS" id="Chst12">
    <property type="organism name" value="mouse"/>
</dbReference>
<dbReference type="PRO" id="PR:Q99LL3"/>
<dbReference type="Proteomes" id="UP000000589">
    <property type="component" value="Chromosome 5"/>
</dbReference>
<dbReference type="RNAct" id="Q99LL3">
    <property type="molecule type" value="protein"/>
</dbReference>
<dbReference type="Bgee" id="ENSMUSG00000036599">
    <property type="expression patterns" value="Expressed in granulocyte and 215 other cell types or tissues"/>
</dbReference>
<dbReference type="ExpressionAtlas" id="Q99LL3">
    <property type="expression patterns" value="baseline and differential"/>
</dbReference>
<dbReference type="GO" id="GO:0000139">
    <property type="term" value="C:Golgi membrane"/>
    <property type="evidence" value="ECO:0007669"/>
    <property type="project" value="UniProtKB-SubCell"/>
</dbReference>
<dbReference type="GO" id="GO:0047756">
    <property type="term" value="F:chondroitin 4-sulfotransferase activity"/>
    <property type="evidence" value="ECO:0000250"/>
    <property type="project" value="UniProtKB"/>
</dbReference>
<dbReference type="GO" id="GO:0016051">
    <property type="term" value="P:carbohydrate biosynthetic process"/>
    <property type="evidence" value="ECO:0007669"/>
    <property type="project" value="InterPro"/>
</dbReference>
<dbReference type="GO" id="GO:0050650">
    <property type="term" value="P:chondroitin sulfate proteoglycan biosynthetic process"/>
    <property type="evidence" value="ECO:0000250"/>
    <property type="project" value="UniProtKB"/>
</dbReference>
<dbReference type="GO" id="GO:0050651">
    <property type="term" value="P:dermatan sulfate proteoglycan biosynthetic process"/>
    <property type="evidence" value="ECO:0000250"/>
    <property type="project" value="UniProtKB"/>
</dbReference>
<dbReference type="InterPro" id="IPR018011">
    <property type="entry name" value="Carb_sulfotrans_8-10"/>
</dbReference>
<dbReference type="InterPro" id="IPR005331">
    <property type="entry name" value="Sulfotransferase"/>
</dbReference>
<dbReference type="PANTHER" id="PTHR12137">
    <property type="entry name" value="CARBOHYDRATE SULFOTRANSFERASE"/>
    <property type="match status" value="1"/>
</dbReference>
<dbReference type="PANTHER" id="PTHR12137:SF4">
    <property type="entry name" value="CARBOHYDRATE SULFOTRANSFERASE 12"/>
    <property type="match status" value="1"/>
</dbReference>
<dbReference type="Pfam" id="PF03567">
    <property type="entry name" value="Sulfotransfer_2"/>
    <property type="match status" value="1"/>
</dbReference>
<name>CHSTC_MOUSE</name>
<accession>Q99LL3</accession>
<accession>Q3TCX9</accession>
<accession>Q9JJS3</accession>
<gene>
    <name type="primary">Chst12</name>
</gene>
<protein>
    <recommendedName>
        <fullName>Carbohydrate sulfotransferase 12</fullName>
        <ecNumber>2.8.2.5</ecNumber>
    </recommendedName>
    <alternativeName>
        <fullName>Chondroitin 4-O-sulfotransferase 2</fullName>
    </alternativeName>
    <alternativeName>
        <fullName>Chondroitin 4-sulfotransferase 2</fullName>
        <shortName>C4ST-2</shortName>
        <shortName>C4ST2</shortName>
    </alternativeName>
</protein>
<sequence>MTKPRLFRLWLVLGSALMILLIIVYWDNVGTAHFYLHTSLSRPHILEPLPTQGLVEENVFTSDVDEFLDTLLSSDAKHNDLSRRKTEQPPVPAPSKPVLSHMEENVRGYDWSTHDAHQNPDRDRQQAERRSLLRDFCANASLAFPTKDRSFDDIPNYELNHLIVDDRHGVIYCYVPKVACTNWKRVMIVLSESLLDRGSPYRDPLDIPREHVHNTSTHLTFNKFWRRYGKFSRHLMKVKLKKYTKFLFVRDPFVRLISAFRSKFELENEEFYRKFAVPMLRLYANHTSLPASVSEAFSAGLKVSFANFIQYLLDPHTEKLAPFNEHWRQVYRLCHPCQIDYDFVGKLETLDEDAAQLLRFLKVDSQLHFPPSYRNRTASSWEEDWFANIPLAWRQQLYKLYEADFVLFGYPKPENLLRD</sequence>
<feature type="chain" id="PRO_0000189669" description="Carbohydrate sulfotransferase 12">
    <location>
        <begin position="1"/>
        <end position="419"/>
    </location>
</feature>
<feature type="topological domain" description="Cytoplasmic" evidence="2">
    <location>
        <begin position="1"/>
        <end position="5"/>
    </location>
</feature>
<feature type="transmembrane region" description="Helical; Signal-anchor for type II membrane protein" evidence="2">
    <location>
        <begin position="6"/>
        <end position="26"/>
    </location>
</feature>
<feature type="topological domain" description="Lumenal" evidence="2">
    <location>
        <begin position="27"/>
        <end position="419"/>
    </location>
</feature>
<feature type="region of interest" description="Disordered" evidence="3">
    <location>
        <begin position="78"/>
        <end position="99"/>
    </location>
</feature>
<feature type="compositionally biased region" description="Basic and acidic residues" evidence="3">
    <location>
        <begin position="78"/>
        <end position="87"/>
    </location>
</feature>
<feature type="binding site" evidence="1">
    <location>
        <begin position="176"/>
        <end position="182"/>
    </location>
    <ligand>
        <name>3'-phosphoadenylyl sulfate</name>
        <dbReference type="ChEBI" id="CHEBI:58339"/>
    </ligand>
</feature>
<feature type="binding site" evidence="1">
    <location>
        <begin position="250"/>
        <end position="258"/>
    </location>
    <ligand>
        <name>3'-phosphoadenylyl sulfate</name>
        <dbReference type="ChEBI" id="CHEBI:58339"/>
    </ligand>
</feature>
<feature type="glycosylation site" description="N-linked (GlcNAc...) asparagine" evidence="2">
    <location>
        <position position="139"/>
    </location>
</feature>
<feature type="glycosylation site" description="N-linked (GlcNAc...) asparagine" evidence="2">
    <location>
        <position position="214"/>
    </location>
</feature>
<feature type="glycosylation site" description="N-linked (GlcNAc...) asparagine" evidence="2">
    <location>
        <position position="285"/>
    </location>
</feature>
<feature type="glycosylation site" description="N-linked (GlcNAc...) asparagine" evidence="2">
    <location>
        <position position="375"/>
    </location>
</feature>
<feature type="sequence conflict" description="In Ref. 1; CAB92140." evidence="4" ref="1">
    <original>V</original>
    <variation>A</variation>
    <location>
        <position position="91"/>
    </location>
</feature>
<organism>
    <name type="scientific">Mus musculus</name>
    <name type="common">Mouse</name>
    <dbReference type="NCBI Taxonomy" id="10090"/>
    <lineage>
        <taxon>Eukaryota</taxon>
        <taxon>Metazoa</taxon>
        <taxon>Chordata</taxon>
        <taxon>Craniata</taxon>
        <taxon>Vertebrata</taxon>
        <taxon>Euteleostomi</taxon>
        <taxon>Mammalia</taxon>
        <taxon>Eutheria</taxon>
        <taxon>Euarchontoglires</taxon>
        <taxon>Glires</taxon>
        <taxon>Rodentia</taxon>
        <taxon>Myomorpha</taxon>
        <taxon>Muroidea</taxon>
        <taxon>Muridae</taxon>
        <taxon>Murinae</taxon>
        <taxon>Mus</taxon>
        <taxon>Mus</taxon>
    </lineage>
</organism>
<reference key="1">
    <citation type="submission" date="2000-05" db="EMBL/GenBank/DDBJ databases">
        <title>Cloning and expression of molecules homologous to HNK-1 sulfotransferase.</title>
        <authorList>
            <person name="Xia G."/>
            <person name="Evers M.R."/>
            <person name="Schachner M."/>
        </authorList>
    </citation>
    <scope>NUCLEOTIDE SEQUENCE [MRNA]</scope>
</reference>
<reference key="2">
    <citation type="journal article" date="2005" name="Science">
        <title>The transcriptional landscape of the mammalian genome.</title>
        <authorList>
            <person name="Carninci P."/>
            <person name="Kasukawa T."/>
            <person name="Katayama S."/>
            <person name="Gough J."/>
            <person name="Frith M.C."/>
            <person name="Maeda N."/>
            <person name="Oyama R."/>
            <person name="Ravasi T."/>
            <person name="Lenhard B."/>
            <person name="Wells C."/>
            <person name="Kodzius R."/>
            <person name="Shimokawa K."/>
            <person name="Bajic V.B."/>
            <person name="Brenner S.E."/>
            <person name="Batalov S."/>
            <person name="Forrest A.R."/>
            <person name="Zavolan M."/>
            <person name="Davis M.J."/>
            <person name="Wilming L.G."/>
            <person name="Aidinis V."/>
            <person name="Allen J.E."/>
            <person name="Ambesi-Impiombato A."/>
            <person name="Apweiler R."/>
            <person name="Aturaliya R.N."/>
            <person name="Bailey T.L."/>
            <person name="Bansal M."/>
            <person name="Baxter L."/>
            <person name="Beisel K.W."/>
            <person name="Bersano T."/>
            <person name="Bono H."/>
            <person name="Chalk A.M."/>
            <person name="Chiu K.P."/>
            <person name="Choudhary V."/>
            <person name="Christoffels A."/>
            <person name="Clutterbuck D.R."/>
            <person name="Crowe M.L."/>
            <person name="Dalla E."/>
            <person name="Dalrymple B.P."/>
            <person name="de Bono B."/>
            <person name="Della Gatta G."/>
            <person name="di Bernardo D."/>
            <person name="Down T."/>
            <person name="Engstrom P."/>
            <person name="Fagiolini M."/>
            <person name="Faulkner G."/>
            <person name="Fletcher C.F."/>
            <person name="Fukushima T."/>
            <person name="Furuno M."/>
            <person name="Futaki S."/>
            <person name="Gariboldi M."/>
            <person name="Georgii-Hemming P."/>
            <person name="Gingeras T.R."/>
            <person name="Gojobori T."/>
            <person name="Green R.E."/>
            <person name="Gustincich S."/>
            <person name="Harbers M."/>
            <person name="Hayashi Y."/>
            <person name="Hensch T.K."/>
            <person name="Hirokawa N."/>
            <person name="Hill D."/>
            <person name="Huminiecki L."/>
            <person name="Iacono M."/>
            <person name="Ikeo K."/>
            <person name="Iwama A."/>
            <person name="Ishikawa T."/>
            <person name="Jakt M."/>
            <person name="Kanapin A."/>
            <person name="Katoh M."/>
            <person name="Kawasawa Y."/>
            <person name="Kelso J."/>
            <person name="Kitamura H."/>
            <person name="Kitano H."/>
            <person name="Kollias G."/>
            <person name="Krishnan S.P."/>
            <person name="Kruger A."/>
            <person name="Kummerfeld S.K."/>
            <person name="Kurochkin I.V."/>
            <person name="Lareau L.F."/>
            <person name="Lazarevic D."/>
            <person name="Lipovich L."/>
            <person name="Liu J."/>
            <person name="Liuni S."/>
            <person name="McWilliam S."/>
            <person name="Madan Babu M."/>
            <person name="Madera M."/>
            <person name="Marchionni L."/>
            <person name="Matsuda H."/>
            <person name="Matsuzawa S."/>
            <person name="Miki H."/>
            <person name="Mignone F."/>
            <person name="Miyake S."/>
            <person name="Morris K."/>
            <person name="Mottagui-Tabar S."/>
            <person name="Mulder N."/>
            <person name="Nakano N."/>
            <person name="Nakauchi H."/>
            <person name="Ng P."/>
            <person name="Nilsson R."/>
            <person name="Nishiguchi S."/>
            <person name="Nishikawa S."/>
            <person name="Nori F."/>
            <person name="Ohara O."/>
            <person name="Okazaki Y."/>
            <person name="Orlando V."/>
            <person name="Pang K.C."/>
            <person name="Pavan W.J."/>
            <person name="Pavesi G."/>
            <person name="Pesole G."/>
            <person name="Petrovsky N."/>
            <person name="Piazza S."/>
            <person name="Reed J."/>
            <person name="Reid J.F."/>
            <person name="Ring B.Z."/>
            <person name="Ringwald M."/>
            <person name="Rost B."/>
            <person name="Ruan Y."/>
            <person name="Salzberg S.L."/>
            <person name="Sandelin A."/>
            <person name="Schneider C."/>
            <person name="Schoenbach C."/>
            <person name="Sekiguchi K."/>
            <person name="Semple C.A."/>
            <person name="Seno S."/>
            <person name="Sessa L."/>
            <person name="Sheng Y."/>
            <person name="Shibata Y."/>
            <person name="Shimada H."/>
            <person name="Shimada K."/>
            <person name="Silva D."/>
            <person name="Sinclair B."/>
            <person name="Sperling S."/>
            <person name="Stupka E."/>
            <person name="Sugiura K."/>
            <person name="Sultana R."/>
            <person name="Takenaka Y."/>
            <person name="Taki K."/>
            <person name="Tammoja K."/>
            <person name="Tan S.L."/>
            <person name="Tang S."/>
            <person name="Taylor M.S."/>
            <person name="Tegner J."/>
            <person name="Teichmann S.A."/>
            <person name="Ueda H.R."/>
            <person name="van Nimwegen E."/>
            <person name="Verardo R."/>
            <person name="Wei C.L."/>
            <person name="Yagi K."/>
            <person name="Yamanishi H."/>
            <person name="Zabarovsky E."/>
            <person name="Zhu S."/>
            <person name="Zimmer A."/>
            <person name="Hide W."/>
            <person name="Bult C."/>
            <person name="Grimmond S.M."/>
            <person name="Teasdale R.D."/>
            <person name="Liu E.T."/>
            <person name="Brusic V."/>
            <person name="Quackenbush J."/>
            <person name="Wahlestedt C."/>
            <person name="Mattick J.S."/>
            <person name="Hume D.A."/>
            <person name="Kai C."/>
            <person name="Sasaki D."/>
            <person name="Tomaru Y."/>
            <person name="Fukuda S."/>
            <person name="Kanamori-Katayama M."/>
            <person name="Suzuki M."/>
            <person name="Aoki J."/>
            <person name="Arakawa T."/>
            <person name="Iida J."/>
            <person name="Imamura K."/>
            <person name="Itoh M."/>
            <person name="Kato T."/>
            <person name="Kawaji H."/>
            <person name="Kawagashira N."/>
            <person name="Kawashima T."/>
            <person name="Kojima M."/>
            <person name="Kondo S."/>
            <person name="Konno H."/>
            <person name="Nakano K."/>
            <person name="Ninomiya N."/>
            <person name="Nishio T."/>
            <person name="Okada M."/>
            <person name="Plessy C."/>
            <person name="Shibata K."/>
            <person name="Shiraki T."/>
            <person name="Suzuki S."/>
            <person name="Tagami M."/>
            <person name="Waki K."/>
            <person name="Watahiki A."/>
            <person name="Okamura-Oho Y."/>
            <person name="Suzuki H."/>
            <person name="Kawai J."/>
            <person name="Hayashizaki Y."/>
        </authorList>
    </citation>
    <scope>NUCLEOTIDE SEQUENCE [LARGE SCALE MRNA]</scope>
    <source>
        <strain>C57BL/6J</strain>
        <strain>NOD</strain>
        <tissue>Heart</tissue>
    </source>
</reference>
<reference key="3">
    <citation type="submission" date="2005-07" db="EMBL/GenBank/DDBJ databases">
        <authorList>
            <person name="Mural R.J."/>
            <person name="Adams M.D."/>
            <person name="Myers E.W."/>
            <person name="Smith H.O."/>
            <person name="Venter J.C."/>
        </authorList>
    </citation>
    <scope>NUCLEOTIDE SEQUENCE [LARGE SCALE GENOMIC DNA]</scope>
</reference>
<reference key="4">
    <citation type="journal article" date="2004" name="Genome Res.">
        <title>The status, quality, and expansion of the NIH full-length cDNA project: the Mammalian Gene Collection (MGC).</title>
        <authorList>
            <consortium name="The MGC Project Team"/>
        </authorList>
    </citation>
    <scope>NUCLEOTIDE SEQUENCE [LARGE SCALE MRNA]</scope>
    <source>
        <strain>Czech II</strain>
        <tissue>Mammary tumor</tissue>
    </source>
</reference>
<comment type="function">
    <text evidence="1">Catalyzes the transfer of sulfate to position 4 of the N-acetylgalactosamine (GalNAc) residue of chondroitin and desulfated dermatan sulfate. Chondroitin sulfate constitutes the predominant proteoglycan present in cartilage and is distributed on the surfaces of many cells and extracellular matrices. Activity toward partially desulfated dermatan sulfate is however lower. Does not form 4, 6-di-O-sulfated GalNAc when chondroitin sulfate C is used as an acceptor (By similarity).</text>
</comment>
<comment type="catalytic activity">
    <reaction>
        <text>chondroitin beta-D-glucuronate + n 3'-phosphoadenylyl sulfate = chondroitin 4'-sulfate + n adenosine 3',5'-bisphosphate + n H(+)</text>
        <dbReference type="Rhea" id="RHEA:16101"/>
        <dbReference type="Rhea" id="RHEA-COMP:9827"/>
        <dbReference type="Rhea" id="RHEA-COMP:9829"/>
        <dbReference type="ChEBI" id="CHEBI:15378"/>
        <dbReference type="ChEBI" id="CHEBI:57652"/>
        <dbReference type="ChEBI" id="CHEBI:58339"/>
        <dbReference type="ChEBI" id="CHEBI:58343"/>
        <dbReference type="ChEBI" id="CHEBI:58422"/>
        <dbReference type="EC" id="2.8.2.5"/>
    </reaction>
</comment>
<comment type="subcellular location">
    <subcellularLocation>
        <location evidence="1">Golgi apparatus membrane</location>
        <topology evidence="1">Single-pass type II membrane protein</topology>
    </subcellularLocation>
</comment>
<comment type="similarity">
    <text evidence="4">Belongs to the sulfotransferase 2 family.</text>
</comment>
<evidence type="ECO:0000250" key="1"/>
<evidence type="ECO:0000255" key="2"/>
<evidence type="ECO:0000256" key="3">
    <source>
        <dbReference type="SAM" id="MobiDB-lite"/>
    </source>
</evidence>
<evidence type="ECO:0000305" key="4"/>